<feature type="chain" id="PRO_0000190337" description="Recombination protein RecR">
    <location>
        <begin position="1"/>
        <end position="197"/>
    </location>
</feature>
<feature type="domain" description="Toprim" evidence="1">
    <location>
        <begin position="77"/>
        <end position="172"/>
    </location>
</feature>
<feature type="zinc finger region" description="C4-type" evidence="1">
    <location>
        <begin position="54"/>
        <end position="69"/>
    </location>
</feature>
<protein>
    <recommendedName>
        <fullName evidence="1">Recombination protein RecR</fullName>
    </recommendedName>
</protein>
<proteinExistence type="inferred from homology"/>
<dbReference type="EMBL" id="CR628336">
    <property type="protein sequence ID" value="CAH13957.1"/>
    <property type="molecule type" value="Genomic_DNA"/>
</dbReference>
<dbReference type="RefSeq" id="WP_011216607.1">
    <property type="nucleotide sequence ID" value="NC_006368.1"/>
</dbReference>
<dbReference type="SMR" id="Q5X1D9"/>
<dbReference type="KEGG" id="lpp:lpp2804"/>
<dbReference type="LegioList" id="lpp2804"/>
<dbReference type="HOGENOM" id="CLU_060739_1_2_6"/>
<dbReference type="GO" id="GO:0003677">
    <property type="term" value="F:DNA binding"/>
    <property type="evidence" value="ECO:0007669"/>
    <property type="project" value="UniProtKB-UniRule"/>
</dbReference>
<dbReference type="GO" id="GO:0008270">
    <property type="term" value="F:zinc ion binding"/>
    <property type="evidence" value="ECO:0007669"/>
    <property type="project" value="UniProtKB-KW"/>
</dbReference>
<dbReference type="GO" id="GO:0006310">
    <property type="term" value="P:DNA recombination"/>
    <property type="evidence" value="ECO:0007669"/>
    <property type="project" value="UniProtKB-UniRule"/>
</dbReference>
<dbReference type="GO" id="GO:0006281">
    <property type="term" value="P:DNA repair"/>
    <property type="evidence" value="ECO:0007669"/>
    <property type="project" value="UniProtKB-UniRule"/>
</dbReference>
<dbReference type="CDD" id="cd01025">
    <property type="entry name" value="TOPRIM_recR"/>
    <property type="match status" value="1"/>
</dbReference>
<dbReference type="Gene3D" id="3.40.1360.10">
    <property type="match status" value="1"/>
</dbReference>
<dbReference type="Gene3D" id="1.10.8.420">
    <property type="entry name" value="RecR Domain 1"/>
    <property type="match status" value="1"/>
</dbReference>
<dbReference type="HAMAP" id="MF_00017">
    <property type="entry name" value="RecR"/>
    <property type="match status" value="1"/>
</dbReference>
<dbReference type="InterPro" id="IPR000093">
    <property type="entry name" value="DNA_Rcmb_RecR"/>
</dbReference>
<dbReference type="InterPro" id="IPR023627">
    <property type="entry name" value="Rcmb_RecR"/>
</dbReference>
<dbReference type="InterPro" id="IPR015967">
    <property type="entry name" value="Rcmb_RecR_Znf"/>
</dbReference>
<dbReference type="InterPro" id="IPR006171">
    <property type="entry name" value="TOPRIM_dom"/>
</dbReference>
<dbReference type="InterPro" id="IPR034137">
    <property type="entry name" value="TOPRIM_RecR"/>
</dbReference>
<dbReference type="NCBIfam" id="TIGR00615">
    <property type="entry name" value="recR"/>
    <property type="match status" value="1"/>
</dbReference>
<dbReference type="PANTHER" id="PTHR30446">
    <property type="entry name" value="RECOMBINATION PROTEIN RECR"/>
    <property type="match status" value="1"/>
</dbReference>
<dbReference type="PANTHER" id="PTHR30446:SF0">
    <property type="entry name" value="RECOMBINATION PROTEIN RECR"/>
    <property type="match status" value="1"/>
</dbReference>
<dbReference type="Pfam" id="PF21175">
    <property type="entry name" value="RecR_C"/>
    <property type="match status" value="1"/>
</dbReference>
<dbReference type="Pfam" id="PF21176">
    <property type="entry name" value="RecR_HhH"/>
    <property type="match status" value="1"/>
</dbReference>
<dbReference type="Pfam" id="PF02132">
    <property type="entry name" value="RecR_ZnF"/>
    <property type="match status" value="1"/>
</dbReference>
<dbReference type="Pfam" id="PF13662">
    <property type="entry name" value="Toprim_4"/>
    <property type="match status" value="1"/>
</dbReference>
<dbReference type="SMART" id="SM00493">
    <property type="entry name" value="TOPRIM"/>
    <property type="match status" value="1"/>
</dbReference>
<dbReference type="SUPFAM" id="SSF111304">
    <property type="entry name" value="Recombination protein RecR"/>
    <property type="match status" value="1"/>
</dbReference>
<dbReference type="PROSITE" id="PS01300">
    <property type="entry name" value="RECR"/>
    <property type="match status" value="1"/>
</dbReference>
<dbReference type="PROSITE" id="PS50880">
    <property type="entry name" value="TOPRIM"/>
    <property type="match status" value="1"/>
</dbReference>
<gene>
    <name evidence="1" type="primary">recR</name>
    <name type="ordered locus">lpp2804</name>
</gene>
<comment type="function">
    <text evidence="1">May play a role in DNA repair. It seems to be involved in an RecBC-independent recombinational process of DNA repair. It may act with RecF and RecO.</text>
</comment>
<comment type="similarity">
    <text evidence="1">Belongs to the RecR family.</text>
</comment>
<evidence type="ECO:0000255" key="1">
    <source>
        <dbReference type="HAMAP-Rule" id="MF_00017"/>
    </source>
</evidence>
<reference key="1">
    <citation type="journal article" date="2004" name="Nat. Genet.">
        <title>Evidence in the Legionella pneumophila genome for exploitation of host cell functions and high genome plasticity.</title>
        <authorList>
            <person name="Cazalet C."/>
            <person name="Rusniok C."/>
            <person name="Brueggemann H."/>
            <person name="Zidane N."/>
            <person name="Magnier A."/>
            <person name="Ma L."/>
            <person name="Tichit M."/>
            <person name="Jarraud S."/>
            <person name="Bouchier C."/>
            <person name="Vandenesch F."/>
            <person name="Kunst F."/>
            <person name="Etienne J."/>
            <person name="Glaser P."/>
            <person name="Buchrieser C."/>
        </authorList>
    </citation>
    <scope>NUCLEOTIDE SEQUENCE [LARGE SCALE GENOMIC DNA]</scope>
    <source>
        <strain>Paris</strain>
    </source>
</reference>
<name>RECR_LEGPA</name>
<keyword id="KW-0227">DNA damage</keyword>
<keyword id="KW-0233">DNA recombination</keyword>
<keyword id="KW-0234">DNA repair</keyword>
<keyword id="KW-0479">Metal-binding</keyword>
<keyword id="KW-0862">Zinc</keyword>
<keyword id="KW-0863">Zinc-finger</keyword>
<organism>
    <name type="scientific">Legionella pneumophila (strain Paris)</name>
    <dbReference type="NCBI Taxonomy" id="297246"/>
    <lineage>
        <taxon>Bacteria</taxon>
        <taxon>Pseudomonadati</taxon>
        <taxon>Pseudomonadota</taxon>
        <taxon>Gammaproteobacteria</taxon>
        <taxon>Legionellales</taxon>
        <taxon>Legionellaceae</taxon>
        <taxon>Legionella</taxon>
    </lineage>
</organism>
<accession>Q5X1D9</accession>
<sequence length="197" mass="21705">MDALSRLVEALRCLPGVGPKSAQRMVFHLLQHQRQRGLHLASCLEQAMKHISHCQQCNNYTEQTLCTLCQNPNRDSTLLCVVESPADVSAIEQSNSFQGKYFVLMGKISPLDGLGPDDIGLPKLKELIIREKIQEVILALSPSVESQTTIHFIHQLLKDETVNISQLAHGIPSGGELEFLDGNTISSALKNRAVINV</sequence>